<reference key="1">
    <citation type="journal article" date="2010" name="Genome Biol.">
        <title>Structure and dynamics of the pan-genome of Streptococcus pneumoniae and closely related species.</title>
        <authorList>
            <person name="Donati C."/>
            <person name="Hiller N.L."/>
            <person name="Tettelin H."/>
            <person name="Muzzi A."/>
            <person name="Croucher N.J."/>
            <person name="Angiuoli S.V."/>
            <person name="Oggioni M."/>
            <person name="Dunning Hotopp J.C."/>
            <person name="Hu F.Z."/>
            <person name="Riley D.R."/>
            <person name="Covacci A."/>
            <person name="Mitchell T.J."/>
            <person name="Bentley S.D."/>
            <person name="Kilian M."/>
            <person name="Ehrlich G.D."/>
            <person name="Rappuoli R."/>
            <person name="Moxon E.R."/>
            <person name="Masignani V."/>
        </authorList>
    </citation>
    <scope>NUCLEOTIDE SEQUENCE [LARGE SCALE GENOMIC DNA]</scope>
    <source>
        <strain>70585</strain>
    </source>
</reference>
<feature type="chain" id="PRO_1000165965" description="Large ribosomal subunit protein uL24">
    <location>
        <begin position="1"/>
        <end position="101"/>
    </location>
</feature>
<accession>C1CAM3</accession>
<dbReference type="EMBL" id="CP000918">
    <property type="protein sequence ID" value="ACO17038.1"/>
    <property type="molecule type" value="Genomic_DNA"/>
</dbReference>
<dbReference type="RefSeq" id="WP_000497691.1">
    <property type="nucleotide sequence ID" value="NC_012468.1"/>
</dbReference>
<dbReference type="SMR" id="C1CAM3"/>
<dbReference type="GeneID" id="93738968"/>
<dbReference type="KEGG" id="snm:SP70585_0276"/>
<dbReference type="HOGENOM" id="CLU_093315_2_0_9"/>
<dbReference type="Proteomes" id="UP000002211">
    <property type="component" value="Chromosome"/>
</dbReference>
<dbReference type="GO" id="GO:1990904">
    <property type="term" value="C:ribonucleoprotein complex"/>
    <property type="evidence" value="ECO:0007669"/>
    <property type="project" value="UniProtKB-KW"/>
</dbReference>
<dbReference type="GO" id="GO:0005840">
    <property type="term" value="C:ribosome"/>
    <property type="evidence" value="ECO:0007669"/>
    <property type="project" value="UniProtKB-KW"/>
</dbReference>
<dbReference type="GO" id="GO:0019843">
    <property type="term" value="F:rRNA binding"/>
    <property type="evidence" value="ECO:0007669"/>
    <property type="project" value="UniProtKB-UniRule"/>
</dbReference>
<dbReference type="GO" id="GO:0003735">
    <property type="term" value="F:structural constituent of ribosome"/>
    <property type="evidence" value="ECO:0007669"/>
    <property type="project" value="InterPro"/>
</dbReference>
<dbReference type="GO" id="GO:0006412">
    <property type="term" value="P:translation"/>
    <property type="evidence" value="ECO:0007669"/>
    <property type="project" value="UniProtKB-UniRule"/>
</dbReference>
<dbReference type="CDD" id="cd06089">
    <property type="entry name" value="KOW_RPL26"/>
    <property type="match status" value="1"/>
</dbReference>
<dbReference type="FunFam" id="2.30.30.30:FF:000004">
    <property type="entry name" value="50S ribosomal protein L24"/>
    <property type="match status" value="1"/>
</dbReference>
<dbReference type="Gene3D" id="2.30.30.30">
    <property type="match status" value="1"/>
</dbReference>
<dbReference type="HAMAP" id="MF_01326_B">
    <property type="entry name" value="Ribosomal_uL24_B"/>
    <property type="match status" value="1"/>
</dbReference>
<dbReference type="InterPro" id="IPR005824">
    <property type="entry name" value="KOW"/>
</dbReference>
<dbReference type="InterPro" id="IPR014722">
    <property type="entry name" value="Rib_uL2_dom2"/>
</dbReference>
<dbReference type="InterPro" id="IPR003256">
    <property type="entry name" value="Ribosomal_uL24"/>
</dbReference>
<dbReference type="InterPro" id="IPR005825">
    <property type="entry name" value="Ribosomal_uL24_CS"/>
</dbReference>
<dbReference type="InterPro" id="IPR041988">
    <property type="entry name" value="Ribosomal_uL24_KOW"/>
</dbReference>
<dbReference type="InterPro" id="IPR008991">
    <property type="entry name" value="Translation_prot_SH3-like_sf"/>
</dbReference>
<dbReference type="NCBIfam" id="TIGR01079">
    <property type="entry name" value="rplX_bact"/>
    <property type="match status" value="1"/>
</dbReference>
<dbReference type="PANTHER" id="PTHR12903">
    <property type="entry name" value="MITOCHONDRIAL RIBOSOMAL PROTEIN L24"/>
    <property type="match status" value="1"/>
</dbReference>
<dbReference type="Pfam" id="PF00467">
    <property type="entry name" value="KOW"/>
    <property type="match status" value="1"/>
</dbReference>
<dbReference type="Pfam" id="PF17136">
    <property type="entry name" value="ribosomal_L24"/>
    <property type="match status" value="1"/>
</dbReference>
<dbReference type="SMART" id="SM00739">
    <property type="entry name" value="KOW"/>
    <property type="match status" value="1"/>
</dbReference>
<dbReference type="SUPFAM" id="SSF50104">
    <property type="entry name" value="Translation proteins SH3-like domain"/>
    <property type="match status" value="1"/>
</dbReference>
<dbReference type="PROSITE" id="PS01108">
    <property type="entry name" value="RIBOSOMAL_L24"/>
    <property type="match status" value="1"/>
</dbReference>
<comment type="function">
    <text evidence="1">One of two assembly initiator proteins, it binds directly to the 5'-end of the 23S rRNA, where it nucleates assembly of the 50S subunit.</text>
</comment>
<comment type="function">
    <text evidence="1">One of the proteins that surrounds the polypeptide exit tunnel on the outside of the subunit.</text>
</comment>
<comment type="subunit">
    <text evidence="1">Part of the 50S ribosomal subunit.</text>
</comment>
<comment type="similarity">
    <text evidence="1">Belongs to the universal ribosomal protein uL24 family.</text>
</comment>
<gene>
    <name evidence="1" type="primary">rplX</name>
    <name type="ordered locus">SP70585_0276</name>
</gene>
<sequence length="101" mass="10991">MFVKKGDKVRVIAGKDKGTEAVVLTALPKVNKVIVEGVNIVKKHQRPTNELPQGGIIEKEAAIHVSNVQVLDKNGVAGRVGYKFVDGKKVRYNKKSGEVLD</sequence>
<organism>
    <name type="scientific">Streptococcus pneumoniae (strain 70585)</name>
    <dbReference type="NCBI Taxonomy" id="488221"/>
    <lineage>
        <taxon>Bacteria</taxon>
        <taxon>Bacillati</taxon>
        <taxon>Bacillota</taxon>
        <taxon>Bacilli</taxon>
        <taxon>Lactobacillales</taxon>
        <taxon>Streptococcaceae</taxon>
        <taxon>Streptococcus</taxon>
    </lineage>
</organism>
<protein>
    <recommendedName>
        <fullName evidence="1">Large ribosomal subunit protein uL24</fullName>
    </recommendedName>
    <alternativeName>
        <fullName evidence="2">50S ribosomal protein L24</fullName>
    </alternativeName>
</protein>
<name>RL24_STRP7</name>
<proteinExistence type="inferred from homology"/>
<evidence type="ECO:0000255" key="1">
    <source>
        <dbReference type="HAMAP-Rule" id="MF_01326"/>
    </source>
</evidence>
<evidence type="ECO:0000305" key="2"/>
<keyword id="KW-0687">Ribonucleoprotein</keyword>
<keyword id="KW-0689">Ribosomal protein</keyword>
<keyword id="KW-0694">RNA-binding</keyword>
<keyword id="KW-0699">rRNA-binding</keyword>